<sequence length="247" mass="27726">MPRYRLTVEYDGSDYVGWQRQDNGPSVQGAIEKAVLSLTRETVSIRGAGRTDSGVHARGQVAHLDLTREWKSYTLQNALNAHLALAGERVSILDVAEAPGDFDARFSAIRRHYLYRIISRRSPLALEARRAWWVPKPLDHDAMHEAAQRLVGHHDFTTFRSAHCQATSPLRTLDRLDVTRAGELIEIRATAQSFLHNQIRSFAGSLKLVGEGKWTPDDLQAALEARDRKACGPVAPPDGLYFMRVDY</sequence>
<proteinExistence type="inferred from homology"/>
<evidence type="ECO:0000255" key="1">
    <source>
        <dbReference type="HAMAP-Rule" id="MF_00171"/>
    </source>
</evidence>
<accession>Q92SH4</accession>
<reference key="1">
    <citation type="journal article" date="2001" name="Proc. Natl. Acad. Sci. U.S.A.">
        <title>Analysis of the chromosome sequence of the legume symbiont Sinorhizobium meliloti strain 1021.</title>
        <authorList>
            <person name="Capela D."/>
            <person name="Barloy-Hubler F."/>
            <person name="Gouzy J."/>
            <person name="Bothe G."/>
            <person name="Ampe F."/>
            <person name="Batut J."/>
            <person name="Boistard P."/>
            <person name="Becker A."/>
            <person name="Boutry M."/>
            <person name="Cadieu E."/>
            <person name="Dreano S."/>
            <person name="Gloux S."/>
            <person name="Godrie T."/>
            <person name="Goffeau A."/>
            <person name="Kahn D."/>
            <person name="Kiss E."/>
            <person name="Lelaure V."/>
            <person name="Masuy D."/>
            <person name="Pohl T."/>
            <person name="Portetelle D."/>
            <person name="Puehler A."/>
            <person name="Purnelle B."/>
            <person name="Ramsperger U."/>
            <person name="Renard C."/>
            <person name="Thebault P."/>
            <person name="Vandenbol M."/>
            <person name="Weidner S."/>
            <person name="Galibert F."/>
        </authorList>
    </citation>
    <scope>NUCLEOTIDE SEQUENCE [LARGE SCALE GENOMIC DNA]</scope>
    <source>
        <strain>1021</strain>
    </source>
</reference>
<reference key="2">
    <citation type="journal article" date="2001" name="Science">
        <title>The composite genome of the legume symbiont Sinorhizobium meliloti.</title>
        <authorList>
            <person name="Galibert F."/>
            <person name="Finan T.M."/>
            <person name="Long S.R."/>
            <person name="Puehler A."/>
            <person name="Abola P."/>
            <person name="Ampe F."/>
            <person name="Barloy-Hubler F."/>
            <person name="Barnett M.J."/>
            <person name="Becker A."/>
            <person name="Boistard P."/>
            <person name="Bothe G."/>
            <person name="Boutry M."/>
            <person name="Bowser L."/>
            <person name="Buhrmester J."/>
            <person name="Cadieu E."/>
            <person name="Capela D."/>
            <person name="Chain P."/>
            <person name="Cowie A."/>
            <person name="Davis R.W."/>
            <person name="Dreano S."/>
            <person name="Federspiel N.A."/>
            <person name="Fisher R.F."/>
            <person name="Gloux S."/>
            <person name="Godrie T."/>
            <person name="Goffeau A."/>
            <person name="Golding B."/>
            <person name="Gouzy J."/>
            <person name="Gurjal M."/>
            <person name="Hernandez-Lucas I."/>
            <person name="Hong A."/>
            <person name="Huizar L."/>
            <person name="Hyman R.W."/>
            <person name="Jones T."/>
            <person name="Kahn D."/>
            <person name="Kahn M.L."/>
            <person name="Kalman S."/>
            <person name="Keating D.H."/>
            <person name="Kiss E."/>
            <person name="Komp C."/>
            <person name="Lelaure V."/>
            <person name="Masuy D."/>
            <person name="Palm C."/>
            <person name="Peck M.C."/>
            <person name="Pohl T.M."/>
            <person name="Portetelle D."/>
            <person name="Purnelle B."/>
            <person name="Ramsperger U."/>
            <person name="Surzycki R."/>
            <person name="Thebault P."/>
            <person name="Vandenbol M."/>
            <person name="Vorhoelter F.J."/>
            <person name="Weidner S."/>
            <person name="Wells D.H."/>
            <person name="Wong K."/>
            <person name="Yeh K.-C."/>
            <person name="Batut J."/>
        </authorList>
    </citation>
    <scope>NUCLEOTIDE SEQUENCE [LARGE SCALE GENOMIC DNA]</scope>
    <source>
        <strain>1021</strain>
    </source>
</reference>
<organism>
    <name type="scientific">Rhizobium meliloti (strain 1021)</name>
    <name type="common">Ensifer meliloti</name>
    <name type="synonym">Sinorhizobium meliloti</name>
    <dbReference type="NCBI Taxonomy" id="266834"/>
    <lineage>
        <taxon>Bacteria</taxon>
        <taxon>Pseudomonadati</taxon>
        <taxon>Pseudomonadota</taxon>
        <taxon>Alphaproteobacteria</taxon>
        <taxon>Hyphomicrobiales</taxon>
        <taxon>Rhizobiaceae</taxon>
        <taxon>Sinorhizobium/Ensifer group</taxon>
        <taxon>Sinorhizobium</taxon>
    </lineage>
</organism>
<feature type="chain" id="PRO_0000057437" description="tRNA pseudouridine synthase A">
    <location>
        <begin position="1"/>
        <end position="247"/>
    </location>
</feature>
<feature type="active site" description="Nucleophile" evidence="1">
    <location>
        <position position="52"/>
    </location>
</feature>
<feature type="binding site" evidence="1">
    <location>
        <position position="113"/>
    </location>
    <ligand>
        <name>substrate</name>
    </ligand>
</feature>
<comment type="function">
    <text evidence="1">Formation of pseudouridine at positions 38, 39 and 40 in the anticodon stem and loop of transfer RNAs.</text>
</comment>
<comment type="catalytic activity">
    <reaction evidence="1">
        <text>uridine(38/39/40) in tRNA = pseudouridine(38/39/40) in tRNA</text>
        <dbReference type="Rhea" id="RHEA:22376"/>
        <dbReference type="Rhea" id="RHEA-COMP:10085"/>
        <dbReference type="Rhea" id="RHEA-COMP:10087"/>
        <dbReference type="ChEBI" id="CHEBI:65314"/>
        <dbReference type="ChEBI" id="CHEBI:65315"/>
        <dbReference type="EC" id="5.4.99.12"/>
    </reaction>
</comment>
<comment type="subunit">
    <text evidence="1">Homodimer.</text>
</comment>
<comment type="similarity">
    <text evidence="1">Belongs to the tRNA pseudouridine synthase TruA family.</text>
</comment>
<keyword id="KW-0413">Isomerase</keyword>
<keyword id="KW-1185">Reference proteome</keyword>
<keyword id="KW-0819">tRNA processing</keyword>
<dbReference type="EC" id="5.4.99.12" evidence="1"/>
<dbReference type="EMBL" id="AL591688">
    <property type="protein sequence ID" value="CAC41858.1"/>
    <property type="molecule type" value="Genomic_DNA"/>
</dbReference>
<dbReference type="RefSeq" id="NP_384527.1">
    <property type="nucleotide sequence ID" value="NC_003047.1"/>
</dbReference>
<dbReference type="RefSeq" id="WP_010968563.1">
    <property type="nucleotide sequence ID" value="NC_003047.1"/>
</dbReference>
<dbReference type="SMR" id="Q92SH4"/>
<dbReference type="EnsemblBacteria" id="CAC41858">
    <property type="protein sequence ID" value="CAC41858"/>
    <property type="gene ID" value="SMc01099"/>
</dbReference>
<dbReference type="GeneID" id="89574750"/>
<dbReference type="KEGG" id="sme:SMc01099"/>
<dbReference type="PATRIC" id="fig|266834.11.peg.1794"/>
<dbReference type="eggNOG" id="COG0101">
    <property type="taxonomic scope" value="Bacteria"/>
</dbReference>
<dbReference type="HOGENOM" id="CLU_014673_0_2_5"/>
<dbReference type="OrthoDB" id="9811823at2"/>
<dbReference type="Proteomes" id="UP000001976">
    <property type="component" value="Chromosome"/>
</dbReference>
<dbReference type="GO" id="GO:0003723">
    <property type="term" value="F:RNA binding"/>
    <property type="evidence" value="ECO:0007669"/>
    <property type="project" value="InterPro"/>
</dbReference>
<dbReference type="GO" id="GO:0160147">
    <property type="term" value="F:tRNA pseudouridine(38-40) synthase activity"/>
    <property type="evidence" value="ECO:0007669"/>
    <property type="project" value="UniProtKB-EC"/>
</dbReference>
<dbReference type="GO" id="GO:0031119">
    <property type="term" value="P:tRNA pseudouridine synthesis"/>
    <property type="evidence" value="ECO:0007669"/>
    <property type="project" value="UniProtKB-UniRule"/>
</dbReference>
<dbReference type="CDD" id="cd02570">
    <property type="entry name" value="PseudoU_synth_EcTruA"/>
    <property type="match status" value="1"/>
</dbReference>
<dbReference type="FunFam" id="3.30.70.580:FF:000001">
    <property type="entry name" value="tRNA pseudouridine synthase A"/>
    <property type="match status" value="1"/>
</dbReference>
<dbReference type="Gene3D" id="3.30.70.660">
    <property type="entry name" value="Pseudouridine synthase I, catalytic domain, C-terminal subdomain"/>
    <property type="match status" value="1"/>
</dbReference>
<dbReference type="Gene3D" id="3.30.70.580">
    <property type="entry name" value="Pseudouridine synthase I, catalytic domain, N-terminal subdomain"/>
    <property type="match status" value="1"/>
</dbReference>
<dbReference type="HAMAP" id="MF_00171">
    <property type="entry name" value="TruA"/>
    <property type="match status" value="1"/>
</dbReference>
<dbReference type="InterPro" id="IPR020103">
    <property type="entry name" value="PsdUridine_synth_cat_dom_sf"/>
</dbReference>
<dbReference type="InterPro" id="IPR001406">
    <property type="entry name" value="PsdUridine_synth_TruA"/>
</dbReference>
<dbReference type="InterPro" id="IPR020097">
    <property type="entry name" value="PsdUridine_synth_TruA_a/b_dom"/>
</dbReference>
<dbReference type="InterPro" id="IPR020095">
    <property type="entry name" value="PsdUridine_synth_TruA_C"/>
</dbReference>
<dbReference type="InterPro" id="IPR020094">
    <property type="entry name" value="TruA/RsuA/RluB/E/F_N"/>
</dbReference>
<dbReference type="NCBIfam" id="TIGR00071">
    <property type="entry name" value="hisT_truA"/>
    <property type="match status" value="1"/>
</dbReference>
<dbReference type="PANTHER" id="PTHR11142">
    <property type="entry name" value="PSEUDOURIDYLATE SYNTHASE"/>
    <property type="match status" value="1"/>
</dbReference>
<dbReference type="PANTHER" id="PTHR11142:SF0">
    <property type="entry name" value="TRNA PSEUDOURIDINE SYNTHASE-LIKE 1"/>
    <property type="match status" value="1"/>
</dbReference>
<dbReference type="Pfam" id="PF01416">
    <property type="entry name" value="PseudoU_synth_1"/>
    <property type="match status" value="2"/>
</dbReference>
<dbReference type="PIRSF" id="PIRSF001430">
    <property type="entry name" value="tRNA_psdUrid_synth"/>
    <property type="match status" value="1"/>
</dbReference>
<dbReference type="SUPFAM" id="SSF55120">
    <property type="entry name" value="Pseudouridine synthase"/>
    <property type="match status" value="1"/>
</dbReference>
<gene>
    <name evidence="1" type="primary">truA</name>
    <name type="ordered locus">R00421</name>
    <name type="ORF">SMc01099</name>
</gene>
<name>TRUA_RHIME</name>
<protein>
    <recommendedName>
        <fullName evidence="1">tRNA pseudouridine synthase A</fullName>
        <ecNumber evidence="1">5.4.99.12</ecNumber>
    </recommendedName>
    <alternativeName>
        <fullName evidence="1">tRNA pseudouridine(38-40) synthase</fullName>
    </alternativeName>
    <alternativeName>
        <fullName evidence="1">tRNA pseudouridylate synthase I</fullName>
    </alternativeName>
    <alternativeName>
        <fullName evidence="1">tRNA-uridine isomerase I</fullName>
    </alternativeName>
</protein>